<proteinExistence type="inferred from homology"/>
<name>LFTR_DESPS</name>
<gene>
    <name evidence="1" type="primary">aat</name>
    <name type="ordered locus">DP1903</name>
</gene>
<evidence type="ECO:0000255" key="1">
    <source>
        <dbReference type="HAMAP-Rule" id="MF_00688"/>
    </source>
</evidence>
<evidence type="ECO:0000305" key="2"/>
<keyword id="KW-0012">Acyltransferase</keyword>
<keyword id="KW-0963">Cytoplasm</keyword>
<keyword id="KW-1185">Reference proteome</keyword>
<keyword id="KW-0808">Transferase</keyword>
<dbReference type="EC" id="2.3.2.6" evidence="1"/>
<dbReference type="EMBL" id="CR522870">
    <property type="protein sequence ID" value="CAG36632.1"/>
    <property type="status" value="ALT_INIT"/>
    <property type="molecule type" value="Genomic_DNA"/>
</dbReference>
<dbReference type="SMR" id="Q6ALZ3"/>
<dbReference type="STRING" id="177439.DP1903"/>
<dbReference type="KEGG" id="dps:DP1903"/>
<dbReference type="eggNOG" id="COG2360">
    <property type="taxonomic scope" value="Bacteria"/>
</dbReference>
<dbReference type="HOGENOM" id="CLU_075045_0_0_7"/>
<dbReference type="Proteomes" id="UP000000602">
    <property type="component" value="Chromosome"/>
</dbReference>
<dbReference type="GO" id="GO:0005737">
    <property type="term" value="C:cytoplasm"/>
    <property type="evidence" value="ECO:0007669"/>
    <property type="project" value="UniProtKB-SubCell"/>
</dbReference>
<dbReference type="GO" id="GO:0008914">
    <property type="term" value="F:leucyl-tRNA--protein transferase activity"/>
    <property type="evidence" value="ECO:0007669"/>
    <property type="project" value="UniProtKB-UniRule"/>
</dbReference>
<dbReference type="GO" id="GO:0030163">
    <property type="term" value="P:protein catabolic process"/>
    <property type="evidence" value="ECO:0007669"/>
    <property type="project" value="UniProtKB-UniRule"/>
</dbReference>
<dbReference type="FunFam" id="3.30.70.3550:FF:000001">
    <property type="entry name" value="Leucyl/phenylalanyl-tRNA--protein transferase"/>
    <property type="match status" value="1"/>
</dbReference>
<dbReference type="Gene3D" id="3.40.630.70">
    <property type="entry name" value="Leucyl/phenylalanyl-tRNA-protein transferase, C-terminal domain"/>
    <property type="match status" value="1"/>
</dbReference>
<dbReference type="Gene3D" id="3.30.70.3550">
    <property type="entry name" value="Leucyl/phenylalanyl-tRNA-protein transferase, N-terminal domain"/>
    <property type="match status" value="1"/>
</dbReference>
<dbReference type="HAMAP" id="MF_00688">
    <property type="entry name" value="Leu_Phe_trans"/>
    <property type="match status" value="1"/>
</dbReference>
<dbReference type="InterPro" id="IPR016181">
    <property type="entry name" value="Acyl_CoA_acyltransferase"/>
</dbReference>
<dbReference type="InterPro" id="IPR004616">
    <property type="entry name" value="Leu/Phe-tRNA_Trfase"/>
</dbReference>
<dbReference type="InterPro" id="IPR042203">
    <property type="entry name" value="Leu/Phe-tRNA_Trfase_C"/>
</dbReference>
<dbReference type="InterPro" id="IPR042221">
    <property type="entry name" value="Leu/Phe-tRNA_Trfase_N"/>
</dbReference>
<dbReference type="NCBIfam" id="TIGR00667">
    <property type="entry name" value="aat"/>
    <property type="match status" value="1"/>
</dbReference>
<dbReference type="PANTHER" id="PTHR30098">
    <property type="entry name" value="LEUCYL/PHENYLALANYL-TRNA--PROTEIN TRANSFERASE"/>
    <property type="match status" value="1"/>
</dbReference>
<dbReference type="PANTHER" id="PTHR30098:SF2">
    <property type="entry name" value="LEUCYL_PHENYLALANYL-TRNA--PROTEIN TRANSFERASE"/>
    <property type="match status" value="1"/>
</dbReference>
<dbReference type="Pfam" id="PF03588">
    <property type="entry name" value="Leu_Phe_trans"/>
    <property type="match status" value="1"/>
</dbReference>
<dbReference type="SUPFAM" id="SSF55729">
    <property type="entry name" value="Acyl-CoA N-acyltransferases (Nat)"/>
    <property type="match status" value="1"/>
</dbReference>
<accession>Q6ALZ3</accession>
<comment type="function">
    <text evidence="1">Functions in the N-end rule pathway of protein degradation where it conjugates Leu, Phe and, less efficiently, Met from aminoacyl-tRNAs to the N-termini of proteins containing an N-terminal arginine or lysine.</text>
</comment>
<comment type="catalytic activity">
    <reaction evidence="1">
        <text>N-terminal L-lysyl-[protein] + L-leucyl-tRNA(Leu) = N-terminal L-leucyl-L-lysyl-[protein] + tRNA(Leu) + H(+)</text>
        <dbReference type="Rhea" id="RHEA:12340"/>
        <dbReference type="Rhea" id="RHEA-COMP:9613"/>
        <dbReference type="Rhea" id="RHEA-COMP:9622"/>
        <dbReference type="Rhea" id="RHEA-COMP:12670"/>
        <dbReference type="Rhea" id="RHEA-COMP:12671"/>
        <dbReference type="ChEBI" id="CHEBI:15378"/>
        <dbReference type="ChEBI" id="CHEBI:65249"/>
        <dbReference type="ChEBI" id="CHEBI:78442"/>
        <dbReference type="ChEBI" id="CHEBI:78494"/>
        <dbReference type="ChEBI" id="CHEBI:133043"/>
        <dbReference type="EC" id="2.3.2.6"/>
    </reaction>
</comment>
<comment type="catalytic activity">
    <reaction evidence="1">
        <text>N-terminal L-arginyl-[protein] + L-leucyl-tRNA(Leu) = N-terminal L-leucyl-L-arginyl-[protein] + tRNA(Leu) + H(+)</text>
        <dbReference type="Rhea" id="RHEA:50416"/>
        <dbReference type="Rhea" id="RHEA-COMP:9613"/>
        <dbReference type="Rhea" id="RHEA-COMP:9622"/>
        <dbReference type="Rhea" id="RHEA-COMP:12672"/>
        <dbReference type="Rhea" id="RHEA-COMP:12673"/>
        <dbReference type="ChEBI" id="CHEBI:15378"/>
        <dbReference type="ChEBI" id="CHEBI:64719"/>
        <dbReference type="ChEBI" id="CHEBI:78442"/>
        <dbReference type="ChEBI" id="CHEBI:78494"/>
        <dbReference type="ChEBI" id="CHEBI:133044"/>
        <dbReference type="EC" id="2.3.2.6"/>
    </reaction>
</comment>
<comment type="catalytic activity">
    <reaction evidence="1">
        <text>L-phenylalanyl-tRNA(Phe) + an N-terminal L-alpha-aminoacyl-[protein] = an N-terminal L-phenylalanyl-L-alpha-aminoacyl-[protein] + tRNA(Phe)</text>
        <dbReference type="Rhea" id="RHEA:43632"/>
        <dbReference type="Rhea" id="RHEA-COMP:9668"/>
        <dbReference type="Rhea" id="RHEA-COMP:9699"/>
        <dbReference type="Rhea" id="RHEA-COMP:10636"/>
        <dbReference type="Rhea" id="RHEA-COMP:10637"/>
        <dbReference type="ChEBI" id="CHEBI:78442"/>
        <dbReference type="ChEBI" id="CHEBI:78531"/>
        <dbReference type="ChEBI" id="CHEBI:78597"/>
        <dbReference type="ChEBI" id="CHEBI:83561"/>
        <dbReference type="EC" id="2.3.2.6"/>
    </reaction>
</comment>
<comment type="subcellular location">
    <subcellularLocation>
        <location evidence="1">Cytoplasm</location>
    </subcellularLocation>
</comment>
<comment type="similarity">
    <text evidence="1">Belongs to the L/F-transferase family.</text>
</comment>
<comment type="sequence caution" evidence="2">
    <conflict type="erroneous initiation">
        <sequence resource="EMBL-CDS" id="CAG36632"/>
    </conflict>
</comment>
<reference key="1">
    <citation type="journal article" date="2004" name="Environ. Microbiol.">
        <title>The genome of Desulfotalea psychrophila, a sulfate-reducing bacterium from permanently cold Arctic sediments.</title>
        <authorList>
            <person name="Rabus R."/>
            <person name="Ruepp A."/>
            <person name="Frickey T."/>
            <person name="Rattei T."/>
            <person name="Fartmann B."/>
            <person name="Stark M."/>
            <person name="Bauer M."/>
            <person name="Zibat A."/>
            <person name="Lombardot T."/>
            <person name="Becker I."/>
            <person name="Amann J."/>
            <person name="Gellner K."/>
            <person name="Teeling H."/>
            <person name="Leuschner W.D."/>
            <person name="Gloeckner F.-O."/>
            <person name="Lupas A.N."/>
            <person name="Amann R."/>
            <person name="Klenk H.-P."/>
        </authorList>
    </citation>
    <scope>NUCLEOTIDE SEQUENCE [LARGE SCALE GENOMIC DNA]</scope>
    <source>
        <strain>DSM 12343 / LSv54</strain>
    </source>
</reference>
<protein>
    <recommendedName>
        <fullName evidence="1">Leucyl/phenylalanyl-tRNA--protein transferase</fullName>
        <ecNumber evidence="1">2.3.2.6</ecNumber>
    </recommendedName>
    <alternativeName>
        <fullName evidence="1">L/F-transferase</fullName>
    </alternativeName>
    <alternativeName>
        <fullName evidence="1">Leucyltransferase</fullName>
    </alternativeName>
    <alternativeName>
        <fullName evidence="1">Phenyalanyltransferase</fullName>
    </alternativeName>
</protein>
<sequence>NMTVFRLNRDCTFPHPKHAESDGLLAVGGDLSAKRLINGYRDGIFPWYSEGDPILWWYTHPRFVIYPDRFTAGKRLMRYWKKTSYTFTIDQAFSQVIGLCGSSRTGRGEETWILPEMREAYGQLHELGYAHSVECWDVDRLVGGLYGVELGGVFFGESMFSTVSNSSKFCLIYLVEQARKRGVQLIDCQMTTRHLLQFGAVEISGEKFYQHLQLLIADIGPQPAWKI</sequence>
<organism>
    <name type="scientific">Desulfotalea psychrophila (strain LSv54 / DSM 12343)</name>
    <dbReference type="NCBI Taxonomy" id="177439"/>
    <lineage>
        <taxon>Bacteria</taxon>
        <taxon>Pseudomonadati</taxon>
        <taxon>Thermodesulfobacteriota</taxon>
        <taxon>Desulfobulbia</taxon>
        <taxon>Desulfobulbales</taxon>
        <taxon>Desulfocapsaceae</taxon>
        <taxon>Desulfotalea</taxon>
    </lineage>
</organism>
<feature type="chain" id="PRO_0000207215" description="Leucyl/phenylalanyl-tRNA--protein transferase">
    <location>
        <begin position="1"/>
        <end position="227"/>
    </location>
</feature>